<organism>
    <name type="scientific">Rattus norvegicus</name>
    <name type="common">Rat</name>
    <dbReference type="NCBI Taxonomy" id="10116"/>
    <lineage>
        <taxon>Eukaryota</taxon>
        <taxon>Metazoa</taxon>
        <taxon>Chordata</taxon>
        <taxon>Craniata</taxon>
        <taxon>Vertebrata</taxon>
        <taxon>Euteleostomi</taxon>
        <taxon>Mammalia</taxon>
        <taxon>Eutheria</taxon>
        <taxon>Euarchontoglires</taxon>
        <taxon>Glires</taxon>
        <taxon>Rodentia</taxon>
        <taxon>Myomorpha</taxon>
        <taxon>Muroidea</taxon>
        <taxon>Muridae</taxon>
        <taxon>Murinae</taxon>
        <taxon>Rattus</taxon>
    </lineage>
</organism>
<comment type="function">
    <text evidence="1 3 4 10">Facilitative glucose transporter, which is responsible for constitutive or basal glucose uptake (PubMed:2211693). Has a very broad substrate specificity; can transport a wide range of aldoses including both pentoses and hexoses (By similarity). Most important energy carrier of the brain: present at the blood-brain barrier and assures the energy-independent, facilitative transport of glucose into the brain (By similarity). In association with BSG and NXNL1, promotes retinal cone survival by increasing glucose uptake into photoreceptors (By similarity). Required for mesendoderm differentiation (By similarity).</text>
</comment>
<comment type="catalytic activity">
    <reaction evidence="10">
        <text>D-glucose(out) = D-glucose(in)</text>
        <dbReference type="Rhea" id="RHEA:60376"/>
        <dbReference type="ChEBI" id="CHEBI:4167"/>
    </reaction>
</comment>
<comment type="activity regulation">
    <text evidence="1">The uptake of glucose is inhibited by cytochalasin B. Glucose uptake is increased in response to phorbol ester 12-O-tetradecanoylphorbol-13-acetate (TPA) treatment: TPA-induced glucose uptake requires phosphorylation at Ser-226.</text>
</comment>
<comment type="subunit">
    <text evidence="1 3 7 8">Found in a complex with ADD2, DMTN and SLC2A1. Interacts (via C-terminus cytoplasmic region) with DMTN. Interacts with SNX27; the interaction is required when endocytosed to prevent degradation in lysosomes and promote recycling to the plasma membrane. Interacts with STOM (By similarity). Interacts with GIPC (via PDZ domain) (PubMed:10198040). Interacts with SGTA (via Gln-rich region) (PubMed:15708368). Interacts with isoform 1 of BSG (By similarity). Interacts with SMIM43; the interaction may promote SLC2A1-mediated glucose transport to meet the energy needs of mesendoderm differentiation (By similarity).</text>
</comment>
<comment type="subcellular location">
    <subcellularLocation>
        <location evidence="10">Cell membrane</location>
        <topology evidence="5">Multi-pass membrane protein</topology>
    </subcellularLocation>
    <subcellularLocation>
        <location evidence="3">Photoreceptor inner segment</location>
    </subcellularLocation>
</comment>
<comment type="tissue specificity">
    <text evidence="7 9 11 12">Detected in osteoblastic cells (at protein level). Detected in brain, and at lower levels in kidney, heart and lung.</text>
</comment>
<comment type="PTM">
    <text evidence="1">Phosphorylation at Ser-226 by PKC promotes glucose uptake by increasing cell membrane localization.</text>
</comment>
<comment type="similarity">
    <text evidence="14">Belongs to the major facilitator superfamily. Sugar transporter (TC 2.A.1.1) family. Glucose transporter subfamily.</text>
</comment>
<dbReference type="EMBL" id="M13979">
    <property type="protein sequence ID" value="AAA41248.1"/>
    <property type="molecule type" value="mRNA"/>
</dbReference>
<dbReference type="EMBL" id="M22063">
    <property type="protein sequence ID" value="AAA41297.1"/>
    <property type="molecule type" value="Genomic_DNA"/>
</dbReference>
<dbReference type="EMBL" id="M22061">
    <property type="protein sequence ID" value="AAA41297.1"/>
    <property type="status" value="JOINED"/>
    <property type="molecule type" value="Genomic_DNA"/>
</dbReference>
<dbReference type="EMBL" id="M22062">
    <property type="protein sequence ID" value="AAA41297.1"/>
    <property type="status" value="JOINED"/>
    <property type="molecule type" value="Genomic_DNA"/>
</dbReference>
<dbReference type="EMBL" id="BC061873">
    <property type="protein sequence ID" value="AAH61873.1"/>
    <property type="molecule type" value="mRNA"/>
</dbReference>
<dbReference type="PIR" id="A25949">
    <property type="entry name" value="A25949"/>
</dbReference>
<dbReference type="RefSeq" id="NP_620182.1">
    <property type="nucleotide sequence ID" value="NM_138827.2"/>
</dbReference>
<dbReference type="SMR" id="P11167"/>
<dbReference type="BioGRID" id="246902">
    <property type="interactions" value="3"/>
</dbReference>
<dbReference type="ComplexPortal" id="CPX-3113">
    <property type="entry name" value="Glucose transporter complex 1"/>
</dbReference>
<dbReference type="FunCoup" id="P11167">
    <property type="interactions" value="797"/>
</dbReference>
<dbReference type="IntAct" id="P11167">
    <property type="interactions" value="1"/>
</dbReference>
<dbReference type="MINT" id="P11167"/>
<dbReference type="STRING" id="10116.ENSRNOP00000061340"/>
<dbReference type="BindingDB" id="P11167"/>
<dbReference type="ChEMBL" id="CHEMBL5214"/>
<dbReference type="GlyCosmos" id="P11167">
    <property type="glycosylation" value="1 site, No reported glycans"/>
</dbReference>
<dbReference type="GlyGen" id="P11167">
    <property type="glycosylation" value="1 site"/>
</dbReference>
<dbReference type="iPTMnet" id="P11167"/>
<dbReference type="PhosphoSitePlus" id="P11167"/>
<dbReference type="SwissPalm" id="P11167"/>
<dbReference type="PaxDb" id="10116-ENSRNOP00000061340"/>
<dbReference type="Ensembl" id="ENSRNOT00000064452.3">
    <property type="protein sequence ID" value="ENSRNOP00000061340.1"/>
    <property type="gene ID" value="ENSRNOG00000007284.8"/>
</dbReference>
<dbReference type="GeneID" id="24778"/>
<dbReference type="KEGG" id="rno:24778"/>
<dbReference type="AGR" id="RGD:3704"/>
<dbReference type="CTD" id="6513"/>
<dbReference type="RGD" id="3704">
    <property type="gene designation" value="Slc2a1"/>
</dbReference>
<dbReference type="eggNOG" id="KOG0569">
    <property type="taxonomic scope" value="Eukaryota"/>
</dbReference>
<dbReference type="GeneTree" id="ENSGT00940000156792"/>
<dbReference type="HOGENOM" id="CLU_001265_30_5_1"/>
<dbReference type="InParanoid" id="P11167"/>
<dbReference type="OMA" id="WAITASF"/>
<dbReference type="OrthoDB" id="4540492at2759"/>
<dbReference type="PhylomeDB" id="P11167"/>
<dbReference type="TreeFam" id="TF313762"/>
<dbReference type="Reactome" id="R-RNO-189200">
    <property type="pathway name" value="Cellular hexose transport"/>
</dbReference>
<dbReference type="Reactome" id="R-RNO-196836">
    <property type="pathway name" value="Vitamin C (ascorbate) metabolism"/>
</dbReference>
<dbReference type="Reactome" id="R-RNO-422356">
    <property type="pathway name" value="Regulation of insulin secretion"/>
</dbReference>
<dbReference type="Reactome" id="R-RNO-5653890">
    <property type="pathway name" value="Lactose synthesis"/>
</dbReference>
<dbReference type="SABIO-RK" id="P11167"/>
<dbReference type="PRO" id="PR:P11167"/>
<dbReference type="Proteomes" id="UP000002494">
    <property type="component" value="Chromosome 5"/>
</dbReference>
<dbReference type="Bgee" id="ENSRNOG00000007284">
    <property type="expression patterns" value="Expressed in frontal cortex and 20 other cell types or tissues"/>
</dbReference>
<dbReference type="ExpressionAtlas" id="P11167">
    <property type="expression patterns" value="baseline and differential"/>
</dbReference>
<dbReference type="GO" id="GO:0016324">
    <property type="term" value="C:apical plasma membrane"/>
    <property type="evidence" value="ECO:0000314"/>
    <property type="project" value="ARUK-UCL"/>
</dbReference>
<dbReference type="GO" id="GO:0016323">
    <property type="term" value="C:basolateral plasma membrane"/>
    <property type="evidence" value="ECO:0000314"/>
    <property type="project" value="ARUK-UCL"/>
</dbReference>
<dbReference type="GO" id="GO:0005901">
    <property type="term" value="C:caveola"/>
    <property type="evidence" value="ECO:0000314"/>
    <property type="project" value="RGD"/>
</dbReference>
<dbReference type="GO" id="GO:0005911">
    <property type="term" value="C:cell-cell junction"/>
    <property type="evidence" value="ECO:0000314"/>
    <property type="project" value="RGD"/>
</dbReference>
<dbReference type="GO" id="GO:0030864">
    <property type="term" value="C:cortical actin cytoskeleton"/>
    <property type="evidence" value="ECO:0000250"/>
    <property type="project" value="UniProtKB"/>
</dbReference>
<dbReference type="GO" id="GO:0005737">
    <property type="term" value="C:cytoplasm"/>
    <property type="evidence" value="ECO:0000314"/>
    <property type="project" value="UniProtKB"/>
</dbReference>
<dbReference type="GO" id="GO:0005829">
    <property type="term" value="C:cytosol"/>
    <property type="evidence" value="ECO:0000266"/>
    <property type="project" value="RGD"/>
</dbReference>
<dbReference type="GO" id="GO:0001674">
    <property type="term" value="C:female germ cell nucleus"/>
    <property type="evidence" value="ECO:0000266"/>
    <property type="project" value="RGD"/>
</dbReference>
<dbReference type="GO" id="GO:0001939">
    <property type="term" value="C:female pronucleus"/>
    <property type="evidence" value="ECO:0000266"/>
    <property type="project" value="RGD"/>
</dbReference>
<dbReference type="GO" id="GO:1990350">
    <property type="term" value="C:glucose transporter complex"/>
    <property type="evidence" value="ECO:0000266"/>
    <property type="project" value="RGD"/>
</dbReference>
<dbReference type="GO" id="GO:0000139">
    <property type="term" value="C:Golgi membrane"/>
    <property type="evidence" value="ECO:0000266"/>
    <property type="project" value="RGD"/>
</dbReference>
<dbReference type="GO" id="GO:0014704">
    <property type="term" value="C:intercalated disc"/>
    <property type="evidence" value="ECO:0000314"/>
    <property type="project" value="RGD"/>
</dbReference>
<dbReference type="GO" id="GO:0016020">
    <property type="term" value="C:membrane"/>
    <property type="evidence" value="ECO:0000266"/>
    <property type="project" value="RGD"/>
</dbReference>
<dbReference type="GO" id="GO:0045121">
    <property type="term" value="C:membrane raft"/>
    <property type="evidence" value="ECO:0000266"/>
    <property type="project" value="RGD"/>
</dbReference>
<dbReference type="GO" id="GO:0030496">
    <property type="term" value="C:midbody"/>
    <property type="evidence" value="ECO:0000266"/>
    <property type="project" value="RGD"/>
</dbReference>
<dbReference type="GO" id="GO:0001917">
    <property type="term" value="C:photoreceptor inner segment"/>
    <property type="evidence" value="ECO:0000266"/>
    <property type="project" value="RGD"/>
</dbReference>
<dbReference type="GO" id="GO:0005886">
    <property type="term" value="C:plasma membrane"/>
    <property type="evidence" value="ECO:0000314"/>
    <property type="project" value="UniProtKB"/>
</dbReference>
<dbReference type="GO" id="GO:0098793">
    <property type="term" value="C:presynapse"/>
    <property type="evidence" value="ECO:0000266"/>
    <property type="project" value="RGD"/>
</dbReference>
<dbReference type="GO" id="GO:0042383">
    <property type="term" value="C:sarcolemma"/>
    <property type="evidence" value="ECO:0000314"/>
    <property type="project" value="ARUK-UCL"/>
</dbReference>
<dbReference type="GO" id="GO:0045202">
    <property type="term" value="C:synapse"/>
    <property type="evidence" value="ECO:0000266"/>
    <property type="project" value="RGD"/>
</dbReference>
<dbReference type="GO" id="GO:0031982">
    <property type="term" value="C:vesicle"/>
    <property type="evidence" value="ECO:0000266"/>
    <property type="project" value="RGD"/>
</dbReference>
<dbReference type="GO" id="GO:0030018">
    <property type="term" value="C:Z disc"/>
    <property type="evidence" value="ECO:0000314"/>
    <property type="project" value="RGD"/>
</dbReference>
<dbReference type="GO" id="GO:0055056">
    <property type="term" value="F:D-glucose transmembrane transporter activity"/>
    <property type="evidence" value="ECO:0000314"/>
    <property type="project" value="UniProtKB"/>
</dbReference>
<dbReference type="GO" id="GO:0033300">
    <property type="term" value="F:dehydroascorbic acid transmembrane transporter activity"/>
    <property type="evidence" value="ECO:0000314"/>
    <property type="project" value="UniProtKB"/>
</dbReference>
<dbReference type="GO" id="GO:0015150">
    <property type="term" value="F:fucose transmembrane transporter activity"/>
    <property type="evidence" value="ECO:0000266"/>
    <property type="project" value="RGD"/>
</dbReference>
<dbReference type="GO" id="GO:0042802">
    <property type="term" value="F:identical protein binding"/>
    <property type="evidence" value="ECO:0000266"/>
    <property type="project" value="RGD"/>
</dbReference>
<dbReference type="GO" id="GO:0019900">
    <property type="term" value="F:kinase binding"/>
    <property type="evidence" value="ECO:0000353"/>
    <property type="project" value="RGD"/>
</dbReference>
<dbReference type="GO" id="GO:0005324">
    <property type="term" value="F:long-chain fatty acid transmembrane transporter activity"/>
    <property type="evidence" value="ECO:0000266"/>
    <property type="project" value="RGD"/>
</dbReference>
<dbReference type="GO" id="GO:0042910">
    <property type="term" value="F:xenobiotic transmembrane transporter activity"/>
    <property type="evidence" value="ECO:0000314"/>
    <property type="project" value="RGD"/>
</dbReference>
<dbReference type="GO" id="GO:0071474">
    <property type="term" value="P:cellular hyperosmotic response"/>
    <property type="evidence" value="ECO:0000270"/>
    <property type="project" value="RGD"/>
</dbReference>
<dbReference type="GO" id="GO:0042149">
    <property type="term" value="P:cellular response to glucose starvation"/>
    <property type="evidence" value="ECO:0000266"/>
    <property type="project" value="RGD"/>
</dbReference>
<dbReference type="GO" id="GO:0071260">
    <property type="term" value="P:cellular response to mechanical stimulus"/>
    <property type="evidence" value="ECO:0000270"/>
    <property type="project" value="RGD"/>
</dbReference>
<dbReference type="GO" id="GO:0007417">
    <property type="term" value="P:central nervous system development"/>
    <property type="evidence" value="ECO:0000266"/>
    <property type="project" value="RGD"/>
</dbReference>
<dbReference type="GO" id="GO:0021987">
    <property type="term" value="P:cerebral cortex development"/>
    <property type="evidence" value="ECO:0000270"/>
    <property type="project" value="RGD"/>
</dbReference>
<dbReference type="GO" id="GO:0046323">
    <property type="term" value="P:D-glucose import"/>
    <property type="evidence" value="ECO:0000315"/>
    <property type="project" value="RGD"/>
</dbReference>
<dbReference type="GO" id="GO:0098708">
    <property type="term" value="P:D-glucose import across plasma membrane"/>
    <property type="evidence" value="ECO:0000266"/>
    <property type="project" value="RGD"/>
</dbReference>
<dbReference type="GO" id="GO:1904659">
    <property type="term" value="P:D-glucose transmembrane transport"/>
    <property type="evidence" value="ECO:0000314"/>
    <property type="project" value="UniProtKB"/>
</dbReference>
<dbReference type="GO" id="GO:0070837">
    <property type="term" value="P:dehydroascorbic acid transport"/>
    <property type="evidence" value="ECO:0000314"/>
    <property type="project" value="UniProtKB"/>
</dbReference>
<dbReference type="GO" id="GO:0007565">
    <property type="term" value="P:female pregnancy"/>
    <property type="evidence" value="ECO:0000270"/>
    <property type="project" value="RGD"/>
</dbReference>
<dbReference type="GO" id="GO:0015911">
    <property type="term" value="P:long-chain fatty acid import across plasma membrane"/>
    <property type="evidence" value="ECO:0000266"/>
    <property type="project" value="RGD"/>
</dbReference>
<dbReference type="GO" id="GO:0045494">
    <property type="term" value="P:photoreceptor cell maintenance"/>
    <property type="evidence" value="ECO:0000250"/>
    <property type="project" value="UniProtKB"/>
</dbReference>
<dbReference type="GO" id="GO:0065003">
    <property type="term" value="P:protein-containing complex assembly"/>
    <property type="evidence" value="ECO:0000250"/>
    <property type="project" value="UniProtKB"/>
</dbReference>
<dbReference type="GO" id="GO:0001666">
    <property type="term" value="P:response to hypoxia"/>
    <property type="evidence" value="ECO:0000270"/>
    <property type="project" value="RGD"/>
</dbReference>
<dbReference type="GO" id="GO:0032868">
    <property type="term" value="P:response to insulin"/>
    <property type="evidence" value="ECO:0000270"/>
    <property type="project" value="RGD"/>
</dbReference>
<dbReference type="GO" id="GO:1904016">
    <property type="term" value="P:response to Thyroglobulin triiodothyronine"/>
    <property type="evidence" value="ECO:0000270"/>
    <property type="project" value="RGD"/>
</dbReference>
<dbReference type="GO" id="GO:0150104">
    <property type="term" value="P:transport across blood-brain barrier"/>
    <property type="evidence" value="ECO:0000266"/>
    <property type="project" value="RGD"/>
</dbReference>
<dbReference type="GO" id="GO:0042908">
    <property type="term" value="P:xenobiotic transport"/>
    <property type="evidence" value="ECO:0000314"/>
    <property type="project" value="RGD"/>
</dbReference>
<dbReference type="CDD" id="cd17431">
    <property type="entry name" value="MFS_GLUT_Class1"/>
    <property type="match status" value="1"/>
</dbReference>
<dbReference type="FunFam" id="1.20.1250.20:FF:000040">
    <property type="entry name" value="Solute carrier family 2, facilitated glucose transporter member 1"/>
    <property type="match status" value="1"/>
</dbReference>
<dbReference type="Gene3D" id="1.20.1250.20">
    <property type="entry name" value="MFS general substrate transporter like domains"/>
    <property type="match status" value="1"/>
</dbReference>
<dbReference type="InterPro" id="IPR002439">
    <property type="entry name" value="Glu_transpt_1"/>
</dbReference>
<dbReference type="InterPro" id="IPR045263">
    <property type="entry name" value="GLUT"/>
</dbReference>
<dbReference type="InterPro" id="IPR020846">
    <property type="entry name" value="MFS_dom"/>
</dbReference>
<dbReference type="InterPro" id="IPR005828">
    <property type="entry name" value="MFS_sugar_transport-like"/>
</dbReference>
<dbReference type="InterPro" id="IPR036259">
    <property type="entry name" value="MFS_trans_sf"/>
</dbReference>
<dbReference type="InterPro" id="IPR003663">
    <property type="entry name" value="Sugar/inositol_transpt"/>
</dbReference>
<dbReference type="InterPro" id="IPR005829">
    <property type="entry name" value="Sugar_transporter_CS"/>
</dbReference>
<dbReference type="NCBIfam" id="TIGR00879">
    <property type="entry name" value="SP"/>
    <property type="match status" value="1"/>
</dbReference>
<dbReference type="PANTHER" id="PTHR23503">
    <property type="entry name" value="SOLUTE CARRIER FAMILY 2"/>
    <property type="match status" value="1"/>
</dbReference>
<dbReference type="PANTHER" id="PTHR23503:SF51">
    <property type="entry name" value="SOLUTE CARRIER FAMILY 2, FACILITATED GLUCOSE TRANSPORTER MEMBER 1"/>
    <property type="match status" value="1"/>
</dbReference>
<dbReference type="Pfam" id="PF00083">
    <property type="entry name" value="Sugar_tr"/>
    <property type="match status" value="1"/>
</dbReference>
<dbReference type="PRINTS" id="PR01190">
    <property type="entry name" value="GLUCTRSPORT1"/>
</dbReference>
<dbReference type="PRINTS" id="PR00171">
    <property type="entry name" value="SUGRTRNSPORT"/>
</dbReference>
<dbReference type="SUPFAM" id="SSF103473">
    <property type="entry name" value="MFS general substrate transporter"/>
    <property type="match status" value="1"/>
</dbReference>
<dbReference type="PROSITE" id="PS50850">
    <property type="entry name" value="MFS"/>
    <property type="match status" value="1"/>
</dbReference>
<dbReference type="PROSITE" id="PS00216">
    <property type="entry name" value="SUGAR_TRANSPORT_1"/>
    <property type="match status" value="1"/>
</dbReference>
<dbReference type="PROSITE" id="PS00217">
    <property type="entry name" value="SUGAR_TRANSPORT_2"/>
    <property type="match status" value="1"/>
</dbReference>
<accession>P11167</accession>
<protein>
    <recommendedName>
        <fullName evidence="14">Solute carrier family 2, facilitated glucose transporter member 1</fullName>
    </recommendedName>
    <alternativeName>
        <fullName evidence="13">Glucose transporter type 1, erythrocyte/brain</fullName>
        <shortName evidence="13">GLUT-1</shortName>
    </alternativeName>
</protein>
<name>GTR1_RAT</name>
<reference key="1">
    <citation type="journal article" date="1986" name="Proc. Natl. Acad. Sci. U.S.A.">
        <title>Cloning and characterization of a cDNA encoding the rat brain glucose-transporter protein.</title>
        <authorList>
            <person name="Birnbaum M.J."/>
            <person name="Haspel H.C."/>
            <person name="Rosen O.M."/>
        </authorList>
    </citation>
    <scope>NUCLEOTIDE SEQUENCE [MRNA]</scope>
    <scope>TISSUE SPECIFICITY</scope>
    <source>
        <tissue>Brain</tissue>
    </source>
</reference>
<reference key="2">
    <citation type="journal article" date="1988" name="J. Biol. Chem.">
        <title>The rat facilitated glucose transporter gene. Transformation and serum-stimulated transcription initiate from identical sites.</title>
        <authorList>
            <person name="Williams S.A."/>
            <person name="Birnbaum M.J."/>
        </authorList>
    </citation>
    <scope>NUCLEOTIDE SEQUENCE [GENOMIC DNA]</scope>
    <scope>TISSUE SPECIFICITY</scope>
    <source>
        <tissue>Brain</tissue>
    </source>
</reference>
<reference key="3">
    <citation type="journal article" date="2004" name="Genome Res.">
        <title>The status, quality, and expansion of the NIH full-length cDNA project: the Mammalian Gene Collection (MGC).</title>
        <authorList>
            <consortium name="The MGC Project Team"/>
        </authorList>
    </citation>
    <scope>NUCLEOTIDE SEQUENCE [LARGE SCALE MRNA]</scope>
    <source>
        <tissue>Prostate</tissue>
    </source>
</reference>
<reference key="4">
    <citation type="journal article" date="1990" name="J. Biol. Chem.">
        <title>Cell surface labeling of glucose transporter isoform GLUT4 by bis-mannose photolabel. Correlation with stimulation of glucose transport in rat adipose cells by insulin and phorbol ester.</title>
        <authorList>
            <person name="Holman G.D."/>
            <person name="Kozka I.J."/>
            <person name="Clark A.E."/>
            <person name="Flower C.J."/>
            <person name="Saltis J."/>
            <person name="Habberfield A.D."/>
            <person name="Simpson I.A."/>
            <person name="Cushman S.W."/>
        </authorList>
    </citation>
    <scope>FUNCTION</scope>
    <scope>TRANSPORTER ACTIVITY</scope>
    <scope>SUBCELLULAR LOCATION</scope>
</reference>
<reference key="5">
    <citation type="journal article" date="1999" name="Mol. Biol. Cell">
        <title>Protein interactions with the glucose transporter binding protein GLUT1CBP that provide a link between GLUT1 and the cytoskeleton.</title>
        <authorList>
            <person name="Bunn R.C."/>
            <person name="Jensen M.A."/>
            <person name="Reed B.C."/>
        </authorList>
    </citation>
    <scope>INTERACTION WITH GIPC</scope>
    <scope>TISSUE SPECIFICITY</scope>
    <source>
        <strain>Fischer 344</strain>
        <tissue>Brain</tissue>
    </source>
</reference>
<reference key="6">
    <citation type="journal article" date="2005" name="Arch. Biochem. Biophys.">
        <title>Small glutamine-rich tetratricopeptide repeat-containing protein is composed of three structural units with distinct functions.</title>
        <authorList>
            <person name="Liou S.T."/>
            <person name="Wang C."/>
        </authorList>
    </citation>
    <scope>INTERACTION WITH SGTA</scope>
</reference>
<reference key="7">
    <citation type="journal article" date="2011" name="Mol. Cell. Biochem.">
        <title>Stimulation of glucose transport in osteoblastic cells by parathyroid hormone and insulin-like growth factor I.</title>
        <authorList>
            <person name="Zoidis E."/>
            <person name="Ghirlanda-Keller C."/>
            <person name="Schmid C."/>
        </authorList>
    </citation>
    <scope>TISSUE SPECIFICITY</scope>
</reference>
<reference key="8">
    <citation type="journal article" date="2012" name="Nat. Commun.">
        <title>Quantitative maps of protein phosphorylation sites across 14 different rat organs and tissues.</title>
        <authorList>
            <person name="Lundby A."/>
            <person name="Secher A."/>
            <person name="Lage K."/>
            <person name="Nordsborg N.B."/>
            <person name="Dmytriyev A."/>
            <person name="Lundby C."/>
            <person name="Olsen J.V."/>
        </authorList>
    </citation>
    <scope>PHOSPHORYLATION [LARGE SCALE ANALYSIS] AT THR-478</scope>
    <scope>IDENTIFICATION BY MASS SPECTROMETRY [LARGE SCALE ANALYSIS]</scope>
</reference>
<gene>
    <name evidence="15" type="primary">Slc2a1</name>
    <name evidence="13" type="synonym">Glut1</name>
</gene>
<feature type="chain" id="PRO_0000050342" description="Solute carrier family 2, facilitated glucose transporter member 1">
    <location>
        <begin position="1"/>
        <end position="492"/>
    </location>
</feature>
<feature type="topological domain" description="Cytoplasmic" evidence="1">
    <location>
        <begin position="1"/>
        <end position="11"/>
    </location>
</feature>
<feature type="transmembrane region" description="Helical; Name=1" evidence="1">
    <location>
        <begin position="12"/>
        <end position="33"/>
    </location>
</feature>
<feature type="topological domain" description="Extracellular" evidence="1">
    <location>
        <begin position="34"/>
        <end position="66"/>
    </location>
</feature>
<feature type="transmembrane region" description="Helical; Name=2" evidence="1">
    <location>
        <begin position="67"/>
        <end position="87"/>
    </location>
</feature>
<feature type="topological domain" description="Cytoplasmic" evidence="1">
    <location>
        <begin position="88"/>
        <end position="90"/>
    </location>
</feature>
<feature type="transmembrane region" description="Helical; Name=3" evidence="1">
    <location>
        <begin position="91"/>
        <end position="112"/>
    </location>
</feature>
<feature type="topological domain" description="Extracellular" evidence="1">
    <location>
        <begin position="113"/>
        <end position="120"/>
    </location>
</feature>
<feature type="transmembrane region" description="Helical; Name=4" evidence="1">
    <location>
        <begin position="121"/>
        <end position="144"/>
    </location>
</feature>
<feature type="topological domain" description="Cytoplasmic" evidence="1">
    <location>
        <begin position="145"/>
        <end position="155"/>
    </location>
</feature>
<feature type="transmembrane region" description="Helical; Name=5" evidence="1">
    <location>
        <begin position="156"/>
        <end position="176"/>
    </location>
</feature>
<feature type="topological domain" description="Extracellular" evidence="1">
    <location>
        <begin position="177"/>
        <end position="185"/>
    </location>
</feature>
<feature type="transmembrane region" description="Helical; Name=6" evidence="1">
    <location>
        <begin position="186"/>
        <end position="206"/>
    </location>
</feature>
<feature type="topological domain" description="Cytoplasmic" evidence="1">
    <location>
        <begin position="207"/>
        <end position="271"/>
    </location>
</feature>
<feature type="transmembrane region" description="Helical; Name=7" evidence="1">
    <location>
        <begin position="272"/>
        <end position="293"/>
    </location>
</feature>
<feature type="topological domain" description="Extracellular" evidence="1">
    <location>
        <begin position="294"/>
        <end position="306"/>
    </location>
</feature>
<feature type="transmembrane region" description="Helical; Name=8" evidence="1">
    <location>
        <begin position="307"/>
        <end position="328"/>
    </location>
</feature>
<feature type="topological domain" description="Cytoplasmic" evidence="1">
    <location>
        <begin position="329"/>
        <end position="334"/>
    </location>
</feature>
<feature type="transmembrane region" description="Helical; Name=9" evidence="1">
    <location>
        <begin position="335"/>
        <end position="355"/>
    </location>
</feature>
<feature type="topological domain" description="Extracellular" evidence="1">
    <location>
        <begin position="356"/>
        <end position="365"/>
    </location>
</feature>
<feature type="transmembrane region" description="Helical; Name=10" evidence="1">
    <location>
        <begin position="366"/>
        <end position="388"/>
    </location>
</feature>
<feature type="topological domain" description="Cytoplasmic" evidence="1">
    <location>
        <begin position="389"/>
        <end position="401"/>
    </location>
</feature>
<feature type="transmembrane region" description="Helical; Name=11" evidence="1">
    <location>
        <begin position="402"/>
        <end position="422"/>
    </location>
</feature>
<feature type="topological domain" description="Extracellular" evidence="1">
    <location>
        <begin position="423"/>
        <end position="429"/>
    </location>
</feature>
<feature type="transmembrane region" description="Helical; Name=12" evidence="1">
    <location>
        <begin position="430"/>
        <end position="450"/>
    </location>
</feature>
<feature type="topological domain" description="Cytoplasmic" evidence="1">
    <location>
        <begin position="451"/>
        <end position="492"/>
    </location>
</feature>
<feature type="region of interest" description="Disordered" evidence="6">
    <location>
        <begin position="468"/>
        <end position="492"/>
    </location>
</feature>
<feature type="binding site" evidence="2">
    <location>
        <position position="161"/>
    </location>
    <ligand>
        <name>D-glucose</name>
        <dbReference type="ChEBI" id="CHEBI:4167"/>
    </ligand>
</feature>
<feature type="binding site" evidence="2">
    <location>
        <begin position="282"/>
        <end position="283"/>
    </location>
    <ligand>
        <name>D-glucose</name>
        <dbReference type="ChEBI" id="CHEBI:4167"/>
    </ligand>
</feature>
<feature type="binding site" evidence="2">
    <location>
        <position position="288"/>
    </location>
    <ligand>
        <name>D-glucose</name>
        <dbReference type="ChEBI" id="CHEBI:4167"/>
    </ligand>
</feature>
<feature type="binding site" evidence="2">
    <location>
        <position position="317"/>
    </location>
    <ligand>
        <name>D-glucose</name>
        <dbReference type="ChEBI" id="CHEBI:4167"/>
    </ligand>
</feature>
<feature type="binding site" evidence="2">
    <location>
        <position position="380"/>
    </location>
    <ligand>
        <name>D-glucose</name>
        <dbReference type="ChEBI" id="CHEBI:4167"/>
    </ligand>
</feature>
<feature type="binding site" evidence="2">
    <location>
        <position position="388"/>
    </location>
    <ligand>
        <name>D-glucose</name>
        <dbReference type="ChEBI" id="CHEBI:4167"/>
    </ligand>
</feature>
<feature type="modified residue" description="N-acetylmethionine" evidence="1">
    <location>
        <position position="1"/>
    </location>
</feature>
<feature type="modified residue" description="Phosphoserine" evidence="1">
    <location>
        <position position="226"/>
    </location>
</feature>
<feature type="modified residue" description="Phosphoserine" evidence="1">
    <location>
        <position position="465"/>
    </location>
</feature>
<feature type="modified residue" description="Phosphothreonine" evidence="16">
    <location>
        <position position="478"/>
    </location>
</feature>
<feature type="modified residue" description="Phosphoserine" evidence="1">
    <location>
        <position position="490"/>
    </location>
</feature>
<feature type="glycosylation site" description="N-linked (GlcNAc...) asparagine" evidence="5">
    <location>
        <position position="45"/>
    </location>
</feature>
<keyword id="KW-0007">Acetylation</keyword>
<keyword id="KW-1003">Cell membrane</keyword>
<keyword id="KW-0325">Glycoprotein</keyword>
<keyword id="KW-0472">Membrane</keyword>
<keyword id="KW-0597">Phosphoprotein</keyword>
<keyword id="KW-1185">Reference proteome</keyword>
<keyword id="KW-0762">Sugar transport</keyword>
<keyword id="KW-0812">Transmembrane</keyword>
<keyword id="KW-1133">Transmembrane helix</keyword>
<keyword id="KW-0813">Transport</keyword>
<proteinExistence type="evidence at protein level"/>
<evidence type="ECO:0000250" key="1">
    <source>
        <dbReference type="UniProtKB" id="P11166"/>
    </source>
</evidence>
<evidence type="ECO:0000250" key="2">
    <source>
        <dbReference type="UniProtKB" id="P11169"/>
    </source>
</evidence>
<evidence type="ECO:0000250" key="3">
    <source>
        <dbReference type="UniProtKB" id="P17809"/>
    </source>
</evidence>
<evidence type="ECO:0000250" key="4">
    <source>
        <dbReference type="UniProtKB" id="P46896"/>
    </source>
</evidence>
<evidence type="ECO:0000255" key="5"/>
<evidence type="ECO:0000256" key="6">
    <source>
        <dbReference type="SAM" id="MobiDB-lite"/>
    </source>
</evidence>
<evidence type="ECO:0000269" key="7">
    <source>
    </source>
</evidence>
<evidence type="ECO:0000269" key="8">
    <source>
    </source>
</evidence>
<evidence type="ECO:0000269" key="9">
    <source>
    </source>
</evidence>
<evidence type="ECO:0000269" key="10">
    <source>
    </source>
</evidence>
<evidence type="ECO:0000269" key="11">
    <source>
    </source>
</evidence>
<evidence type="ECO:0000269" key="12">
    <source>
    </source>
</evidence>
<evidence type="ECO:0000303" key="13">
    <source>
    </source>
</evidence>
<evidence type="ECO:0000305" key="14"/>
<evidence type="ECO:0000312" key="15">
    <source>
        <dbReference type="RGD" id="3704"/>
    </source>
</evidence>
<evidence type="ECO:0007744" key="16">
    <source>
    </source>
</evidence>
<sequence length="492" mass="53963">MEPSSKKVTGRLMLAVGGAVLGSLQFGYNTGVINAPQKVIEEFYNQTWNHRYGESIPSTTLTTLWSLSVAIFSVGGMIGSFSVGLFVNRFGRRNSMLMMNLLAFVSAVLMGFSKLGKSFEMLILGRFIIGVYCGLTTGFVPMYVGEVSPTALRGALGTLHQLGIVVGILIAQVFGLDSIMGNADLWPLLLSVIFIPALLQCILLPFCPESPRFLLINRNEENRAKSVLKKLRGTADVTRDLQEMKEEGRQMMREKKVTILELFRSPAYRQPILIAVVLQLSQQLSGINAVFYYSTSIFEKAGVQQPVYATIGSGIVNTAFTVVSLFVVERAGRRTLHLIGLAGMAGCAVLMTIALALLEQLPWMSYLSIVAIFGFVAFFEVGPGPIPWFIVAELFSQGPRPAAVAVAGFSNWTSNFIVGMCFQYVEQLCGPYVFIIFTVLLVLFFIFTYFKVPETKGRTFDEIASGFRQGGASQSDKTPEELFHPLGADSQV</sequence>